<name>GLK_KLEP7</name>
<protein>
    <recommendedName>
        <fullName evidence="1">Glucokinase</fullName>
        <ecNumber evidence="1">2.7.1.2</ecNumber>
    </recommendedName>
    <alternativeName>
        <fullName evidence="1">Glucose kinase</fullName>
    </alternativeName>
</protein>
<sequence length="321" mass="34422">MTKFALVGDVGGTNARLALCDLASGEISRAKTYSGLDYPSLEAVVRVYLEEHQVTVNEGCIAIACPITGDWVAMTNHTWAFSIAEMKRNLGFAHLEIINDFTAVSMAIPMLKAEHLIQFGGSAPVAGKPIAVYGAGTGLGVAHLVHVDKRWVSLPGEGGHVDFAPNSEEEGIILEELRAELGHVSAERVLSGPGLVNLYRAIVKSDGRLPENLQPREVTERALADSCTDCRRALSLFCVIMGRFGGNLALTLGTFGGVYIAGGIVPRFLEFFKASGFRGGFEDKGRFKAYVQDIPVYLIVHDNPGLLGSGAHLRQTLGQVL</sequence>
<comment type="catalytic activity">
    <reaction evidence="1">
        <text>D-glucose + ATP = D-glucose 6-phosphate + ADP + H(+)</text>
        <dbReference type="Rhea" id="RHEA:17825"/>
        <dbReference type="ChEBI" id="CHEBI:4167"/>
        <dbReference type="ChEBI" id="CHEBI:15378"/>
        <dbReference type="ChEBI" id="CHEBI:30616"/>
        <dbReference type="ChEBI" id="CHEBI:61548"/>
        <dbReference type="ChEBI" id="CHEBI:456216"/>
        <dbReference type="EC" id="2.7.1.2"/>
    </reaction>
</comment>
<comment type="subcellular location">
    <subcellularLocation>
        <location evidence="1">Cytoplasm</location>
    </subcellularLocation>
</comment>
<comment type="similarity">
    <text evidence="1">Belongs to the bacterial glucokinase family.</text>
</comment>
<gene>
    <name evidence="1" type="primary">glk</name>
    <name type="ordered locus">KPN78578_26930</name>
    <name type="ORF">KPN_02738</name>
</gene>
<accession>A6TC33</accession>
<evidence type="ECO:0000255" key="1">
    <source>
        <dbReference type="HAMAP-Rule" id="MF_00524"/>
    </source>
</evidence>
<proteinExistence type="inferred from homology"/>
<feature type="chain" id="PRO_1000050970" description="Glucokinase">
    <location>
        <begin position="1"/>
        <end position="321"/>
    </location>
</feature>
<feature type="binding site" evidence="1">
    <location>
        <begin position="8"/>
        <end position="13"/>
    </location>
    <ligand>
        <name>ATP</name>
        <dbReference type="ChEBI" id="CHEBI:30616"/>
    </ligand>
</feature>
<dbReference type="EC" id="2.7.1.2" evidence="1"/>
<dbReference type="EMBL" id="CP000647">
    <property type="protein sequence ID" value="ABR78154.1"/>
    <property type="molecule type" value="Genomic_DNA"/>
</dbReference>
<dbReference type="RefSeq" id="WP_002913377.1">
    <property type="nucleotide sequence ID" value="NC_009648.1"/>
</dbReference>
<dbReference type="SMR" id="A6TC33"/>
<dbReference type="STRING" id="272620.KPN_02738"/>
<dbReference type="jPOST" id="A6TC33"/>
<dbReference type="PaxDb" id="272620-KPN_02738"/>
<dbReference type="EnsemblBacteria" id="ABR78154">
    <property type="protein sequence ID" value="ABR78154"/>
    <property type="gene ID" value="KPN_02738"/>
</dbReference>
<dbReference type="KEGG" id="kpn:KPN_02738"/>
<dbReference type="HOGENOM" id="CLU_042582_1_0_6"/>
<dbReference type="Proteomes" id="UP000000265">
    <property type="component" value="Chromosome"/>
</dbReference>
<dbReference type="GO" id="GO:0005829">
    <property type="term" value="C:cytosol"/>
    <property type="evidence" value="ECO:0007669"/>
    <property type="project" value="TreeGrafter"/>
</dbReference>
<dbReference type="GO" id="GO:0005524">
    <property type="term" value="F:ATP binding"/>
    <property type="evidence" value="ECO:0007669"/>
    <property type="project" value="UniProtKB-UniRule"/>
</dbReference>
<dbReference type="GO" id="GO:0005536">
    <property type="term" value="F:D-glucose binding"/>
    <property type="evidence" value="ECO:0007669"/>
    <property type="project" value="InterPro"/>
</dbReference>
<dbReference type="GO" id="GO:0004340">
    <property type="term" value="F:glucokinase activity"/>
    <property type="evidence" value="ECO:0007669"/>
    <property type="project" value="UniProtKB-UniRule"/>
</dbReference>
<dbReference type="GO" id="GO:0006096">
    <property type="term" value="P:glycolytic process"/>
    <property type="evidence" value="ECO:0007669"/>
    <property type="project" value="UniProtKB-UniRule"/>
</dbReference>
<dbReference type="CDD" id="cd24008">
    <property type="entry name" value="ASKHA_NBD_GLK"/>
    <property type="match status" value="1"/>
</dbReference>
<dbReference type="FunFam" id="3.30.420.40:FF:000045">
    <property type="entry name" value="Glucokinase"/>
    <property type="match status" value="1"/>
</dbReference>
<dbReference type="FunFam" id="3.40.367.20:FF:000002">
    <property type="entry name" value="Glucokinase"/>
    <property type="match status" value="1"/>
</dbReference>
<dbReference type="Gene3D" id="3.30.420.40">
    <property type="match status" value="1"/>
</dbReference>
<dbReference type="Gene3D" id="3.40.367.20">
    <property type="match status" value="1"/>
</dbReference>
<dbReference type="HAMAP" id="MF_00524">
    <property type="entry name" value="Glucokinase"/>
    <property type="match status" value="1"/>
</dbReference>
<dbReference type="InterPro" id="IPR043129">
    <property type="entry name" value="ATPase_NBD"/>
</dbReference>
<dbReference type="InterPro" id="IPR050201">
    <property type="entry name" value="Bacterial_glucokinase"/>
</dbReference>
<dbReference type="InterPro" id="IPR003836">
    <property type="entry name" value="Glucokinase"/>
</dbReference>
<dbReference type="NCBIfam" id="TIGR00749">
    <property type="entry name" value="glk"/>
    <property type="match status" value="1"/>
</dbReference>
<dbReference type="NCBIfam" id="NF001414">
    <property type="entry name" value="PRK00292.1-1"/>
    <property type="match status" value="1"/>
</dbReference>
<dbReference type="NCBIfam" id="NF001416">
    <property type="entry name" value="PRK00292.1-3"/>
    <property type="match status" value="1"/>
</dbReference>
<dbReference type="PANTHER" id="PTHR47690">
    <property type="entry name" value="GLUCOKINASE"/>
    <property type="match status" value="1"/>
</dbReference>
<dbReference type="PANTHER" id="PTHR47690:SF1">
    <property type="entry name" value="GLUCOKINASE"/>
    <property type="match status" value="1"/>
</dbReference>
<dbReference type="Pfam" id="PF02685">
    <property type="entry name" value="Glucokinase"/>
    <property type="match status" value="1"/>
</dbReference>
<dbReference type="SUPFAM" id="SSF53067">
    <property type="entry name" value="Actin-like ATPase domain"/>
    <property type="match status" value="1"/>
</dbReference>
<reference key="1">
    <citation type="submission" date="2006-09" db="EMBL/GenBank/DDBJ databases">
        <authorList>
            <consortium name="The Klebsiella pneumonia Genome Sequencing Project"/>
            <person name="McClelland M."/>
            <person name="Sanderson E.K."/>
            <person name="Spieth J."/>
            <person name="Clifton W.S."/>
            <person name="Latreille P."/>
            <person name="Sabo A."/>
            <person name="Pepin K."/>
            <person name="Bhonagiri V."/>
            <person name="Porwollik S."/>
            <person name="Ali J."/>
            <person name="Wilson R.K."/>
        </authorList>
    </citation>
    <scope>NUCLEOTIDE SEQUENCE [LARGE SCALE GENOMIC DNA]</scope>
    <source>
        <strain>ATCC 700721 / MGH 78578</strain>
    </source>
</reference>
<keyword id="KW-0067">ATP-binding</keyword>
<keyword id="KW-0963">Cytoplasm</keyword>
<keyword id="KW-0324">Glycolysis</keyword>
<keyword id="KW-0418">Kinase</keyword>
<keyword id="KW-0547">Nucleotide-binding</keyword>
<keyword id="KW-0808">Transferase</keyword>
<organism>
    <name type="scientific">Klebsiella pneumoniae subsp. pneumoniae (strain ATCC 700721 / MGH 78578)</name>
    <dbReference type="NCBI Taxonomy" id="272620"/>
    <lineage>
        <taxon>Bacteria</taxon>
        <taxon>Pseudomonadati</taxon>
        <taxon>Pseudomonadota</taxon>
        <taxon>Gammaproteobacteria</taxon>
        <taxon>Enterobacterales</taxon>
        <taxon>Enterobacteriaceae</taxon>
        <taxon>Klebsiella/Raoultella group</taxon>
        <taxon>Klebsiella</taxon>
        <taxon>Klebsiella pneumoniae complex</taxon>
    </lineage>
</organism>